<name>IL2RB_MOUSE</name>
<evidence type="ECO:0000250" key="1"/>
<evidence type="ECO:0000250" key="2">
    <source>
        <dbReference type="UniProtKB" id="P14784"/>
    </source>
</evidence>
<evidence type="ECO:0000255" key="3"/>
<evidence type="ECO:0000255" key="4">
    <source>
        <dbReference type="PROSITE-ProRule" id="PRU00316"/>
    </source>
</evidence>
<evidence type="ECO:0000256" key="5">
    <source>
        <dbReference type="SAM" id="MobiDB-lite"/>
    </source>
</evidence>
<evidence type="ECO:0000305" key="6"/>
<evidence type="ECO:0007829" key="7">
    <source>
        <dbReference type="PDB" id="6DG5"/>
    </source>
</evidence>
<sequence length="539" mass="60539">MATIALPWSLSLYVFLLLLATPWASAAVKNCSHLECFYNSRANVSCMWSHEEALNVTTCHVHAKSNLRHWNKTCELTLVRQASWACNLILGSFPESQSLTSVDLLDINVVCWEEKGWRRVKTCDFHPFDNLRLVAPHSLQVLHIDTQRCNISWKVSQVSHYIEPYLEFEARRRLLGHSWEDASVLSLKQRQQWLFLEMLIPSTSYEVQVRVKAQRNNTGTWSPWSQPLTFRTRPADPMKEILPMSWLRYLLLVLGCFSGFFSCVYILVKCRYLGPWLKTVLKCHIPDPSEFFSQLSSQHGGDLQKWLSSPVPLSFFSPSGPAPEISPLEVLDGDSKAVQLLLLQKDSAPLPSPSGHSQASCFTNQGYFFFHLPNALEIESCQVYFTYDPCVEEEVEEDGSRLPEGSPHPPLLPLAGEQDDYCAFPPRDDLLLFSPSLSTPNTAYGGSRAPEERSPLSLHEGLPSLASRDLMGLQRPLERMPEGDGEGLSANSSGEQASVPEGNLHGQDQDRGQGPILTLNTDAYLSLQELQAQDSVHLI</sequence>
<feature type="signal peptide">
    <location>
        <begin position="1"/>
        <end position="26"/>
    </location>
</feature>
<feature type="chain" id="PRO_0000010879" description="Interleukin-2 receptor subunit beta">
    <location>
        <begin position="27"/>
        <end position="539"/>
    </location>
</feature>
<feature type="topological domain" description="Extracellular" evidence="3">
    <location>
        <begin position="27"/>
        <end position="240"/>
    </location>
</feature>
<feature type="transmembrane region" description="Helical" evidence="3">
    <location>
        <begin position="241"/>
        <end position="268"/>
    </location>
</feature>
<feature type="topological domain" description="Cytoplasmic" evidence="3">
    <location>
        <begin position="269"/>
        <end position="539"/>
    </location>
</feature>
<feature type="domain" description="Fibronectin type-III" evidence="4">
    <location>
        <begin position="135"/>
        <end position="235"/>
    </location>
</feature>
<feature type="region of interest" description="Disordered" evidence="5">
    <location>
        <begin position="395"/>
        <end position="419"/>
    </location>
</feature>
<feature type="region of interest" description="Disordered" evidence="5">
    <location>
        <begin position="440"/>
        <end position="465"/>
    </location>
</feature>
<feature type="region of interest" description="Disordered" evidence="5">
    <location>
        <begin position="477"/>
        <end position="516"/>
    </location>
</feature>
<feature type="short sequence motif" description="WSXWS motif">
    <location>
        <begin position="221"/>
        <end position="225"/>
    </location>
</feature>
<feature type="short sequence motif" description="Box 1 motif">
    <location>
        <begin position="281"/>
        <end position="289"/>
    </location>
</feature>
<feature type="glycosylation site" description="N-linked (GlcNAc...) asparagine" evidence="3">
    <location>
        <position position="30"/>
    </location>
</feature>
<feature type="glycosylation site" description="N-linked (GlcNAc...) asparagine" evidence="3">
    <location>
        <position position="43"/>
    </location>
</feature>
<feature type="glycosylation site" description="N-linked (GlcNAc...) asparagine" evidence="3">
    <location>
        <position position="55"/>
    </location>
</feature>
<feature type="glycosylation site" description="N-linked (GlcNAc...) asparagine" evidence="3">
    <location>
        <position position="71"/>
    </location>
</feature>
<feature type="glycosylation site" description="N-linked (GlcNAc...) asparagine" evidence="3">
    <location>
        <position position="150"/>
    </location>
</feature>
<feature type="glycosylation site" description="N-linked (GlcNAc...) asparagine" evidence="3">
    <location>
        <position position="216"/>
    </location>
</feature>
<feature type="disulfide bond" evidence="1">
    <location>
        <begin position="36"/>
        <end position="46"/>
    </location>
</feature>
<feature type="disulfide bond" evidence="1">
    <location>
        <begin position="74"/>
        <end position="86"/>
    </location>
</feature>
<feature type="strand" evidence="7">
    <location>
        <begin position="29"/>
        <end position="38"/>
    </location>
</feature>
<feature type="strand" evidence="7">
    <location>
        <begin position="40"/>
        <end position="49"/>
    </location>
</feature>
<feature type="strand" evidence="7">
    <location>
        <begin position="59"/>
        <end position="68"/>
    </location>
</feature>
<feature type="strand" evidence="7">
    <location>
        <begin position="72"/>
        <end position="75"/>
    </location>
</feature>
<feature type="strand" evidence="7">
    <location>
        <begin position="77"/>
        <end position="80"/>
    </location>
</feature>
<feature type="strand" evidence="7">
    <location>
        <begin position="83"/>
        <end position="89"/>
    </location>
</feature>
<feature type="strand" evidence="7">
    <location>
        <begin position="105"/>
        <end position="112"/>
    </location>
</feature>
<feature type="strand" evidence="7">
    <location>
        <begin position="114"/>
        <end position="125"/>
    </location>
</feature>
<feature type="helix" evidence="7">
    <location>
        <begin position="127"/>
        <end position="129"/>
    </location>
</feature>
<feature type="strand" evidence="7">
    <location>
        <begin position="137"/>
        <end position="144"/>
    </location>
</feature>
<feature type="strand" evidence="7">
    <location>
        <begin position="149"/>
        <end position="154"/>
    </location>
</feature>
<feature type="turn" evidence="7">
    <location>
        <begin position="160"/>
        <end position="162"/>
    </location>
</feature>
<feature type="helix" evidence="7">
    <location>
        <begin position="163"/>
        <end position="165"/>
    </location>
</feature>
<feature type="strand" evidence="7">
    <location>
        <begin position="166"/>
        <end position="174"/>
    </location>
</feature>
<feature type="strand" evidence="7">
    <location>
        <begin position="179"/>
        <end position="187"/>
    </location>
</feature>
<feature type="strand" evidence="7">
    <location>
        <begin position="193"/>
        <end position="196"/>
    </location>
</feature>
<feature type="strand" evidence="7">
    <location>
        <begin position="204"/>
        <end position="213"/>
    </location>
</feature>
<feature type="strand" evidence="7">
    <location>
        <begin position="215"/>
        <end position="217"/>
    </location>
</feature>
<feature type="strand" evidence="7">
    <location>
        <begin position="228"/>
        <end position="231"/>
    </location>
</feature>
<accession>P16297</accession>
<accession>Q3TZT2</accession>
<comment type="function">
    <text evidence="2">Receptor for interleukin-2. This beta subunit is involved in receptor mediated endocytosis and transduces the mitogenic signals of IL2. Probably in association with IL15RA, involved in the stimulation of neutrophil phagocytosis by IL15 (By similarity).</text>
</comment>
<comment type="subunit">
    <text evidence="2">Non-covalent dimer of an alpha and a beta subunit. IL2R exists in 3 different forms: a high affinity dimer, an intermediate affinity monomer (beta subunit), and a low affinity monomer (alpha subunit). The high and intermediate affinity forms also associate with a gamma subunit. Interacts with SHB upon interleukin stimulation (By similarity).</text>
</comment>
<comment type="subcellular location">
    <subcellularLocation>
        <location evidence="2">Cell membrane</location>
        <topology evidence="3">Single-pass type I membrane protein</topology>
    </subcellularLocation>
    <subcellularLocation>
        <location evidence="2">Cell surface</location>
    </subcellularLocation>
</comment>
<comment type="domain">
    <text>The WSXWS motif appears to be necessary for proper protein folding and thereby efficient intracellular transport and cell-surface receptor binding.</text>
</comment>
<comment type="domain">
    <text>The box 1 motif is required for JAK interaction and/or activation.</text>
</comment>
<comment type="similarity">
    <text evidence="6">Belongs to the type I cytokine receptor family. Type 4 subfamily.</text>
</comment>
<gene>
    <name type="primary">Il2rb</name>
</gene>
<protein>
    <recommendedName>
        <fullName>Interleukin-2 receptor subunit beta</fullName>
        <shortName>IL-2 receptor subunit beta</shortName>
        <shortName>IL-2R subunit beta</shortName>
        <shortName>IL-2RB</shortName>
    </recommendedName>
    <alternativeName>
        <fullName>High affinity IL-2 receptor subunit beta</fullName>
    </alternativeName>
    <alternativeName>
        <fullName>p70-75</fullName>
    </alternativeName>
    <cdAntigenName>CD122</cdAntigenName>
</protein>
<organism>
    <name type="scientific">Mus musculus</name>
    <name type="common">Mouse</name>
    <dbReference type="NCBI Taxonomy" id="10090"/>
    <lineage>
        <taxon>Eukaryota</taxon>
        <taxon>Metazoa</taxon>
        <taxon>Chordata</taxon>
        <taxon>Craniata</taxon>
        <taxon>Vertebrata</taxon>
        <taxon>Euteleostomi</taxon>
        <taxon>Mammalia</taxon>
        <taxon>Eutheria</taxon>
        <taxon>Euarchontoglires</taxon>
        <taxon>Glires</taxon>
        <taxon>Rodentia</taxon>
        <taxon>Myomorpha</taxon>
        <taxon>Muroidea</taxon>
        <taxon>Muridae</taxon>
        <taxon>Murinae</taxon>
        <taxon>Mus</taxon>
        <taxon>Mus</taxon>
    </lineage>
</organism>
<reference key="1">
    <citation type="journal article" date="1990" name="Proc. Natl. Acad. Sci. U.S.A.">
        <title>Murine interleukin 2 receptor beta chain: dysregulated gene expression in lymphoma line EL-4 caused by a promoter insertion.</title>
        <authorList>
            <person name="Kono T."/>
            <person name="Doi T."/>
            <person name="Yamada G."/>
            <person name="Hatakeyama M."/>
            <person name="Minamoto S."/>
            <person name="Tsudo M."/>
            <person name="Miyasaka M."/>
            <person name="Miyata T."/>
            <person name="Taniguchi T."/>
        </authorList>
    </citation>
    <scope>NUCLEOTIDE SEQUENCE [MRNA]</scope>
</reference>
<reference key="2">
    <citation type="journal article" date="2005" name="Science">
        <title>The transcriptional landscape of the mammalian genome.</title>
        <authorList>
            <person name="Carninci P."/>
            <person name="Kasukawa T."/>
            <person name="Katayama S."/>
            <person name="Gough J."/>
            <person name="Frith M.C."/>
            <person name="Maeda N."/>
            <person name="Oyama R."/>
            <person name="Ravasi T."/>
            <person name="Lenhard B."/>
            <person name="Wells C."/>
            <person name="Kodzius R."/>
            <person name="Shimokawa K."/>
            <person name="Bajic V.B."/>
            <person name="Brenner S.E."/>
            <person name="Batalov S."/>
            <person name="Forrest A.R."/>
            <person name="Zavolan M."/>
            <person name="Davis M.J."/>
            <person name="Wilming L.G."/>
            <person name="Aidinis V."/>
            <person name="Allen J.E."/>
            <person name="Ambesi-Impiombato A."/>
            <person name="Apweiler R."/>
            <person name="Aturaliya R.N."/>
            <person name="Bailey T.L."/>
            <person name="Bansal M."/>
            <person name="Baxter L."/>
            <person name="Beisel K.W."/>
            <person name="Bersano T."/>
            <person name="Bono H."/>
            <person name="Chalk A.M."/>
            <person name="Chiu K.P."/>
            <person name="Choudhary V."/>
            <person name="Christoffels A."/>
            <person name="Clutterbuck D.R."/>
            <person name="Crowe M.L."/>
            <person name="Dalla E."/>
            <person name="Dalrymple B.P."/>
            <person name="de Bono B."/>
            <person name="Della Gatta G."/>
            <person name="di Bernardo D."/>
            <person name="Down T."/>
            <person name="Engstrom P."/>
            <person name="Fagiolini M."/>
            <person name="Faulkner G."/>
            <person name="Fletcher C.F."/>
            <person name="Fukushima T."/>
            <person name="Furuno M."/>
            <person name="Futaki S."/>
            <person name="Gariboldi M."/>
            <person name="Georgii-Hemming P."/>
            <person name="Gingeras T.R."/>
            <person name="Gojobori T."/>
            <person name="Green R.E."/>
            <person name="Gustincich S."/>
            <person name="Harbers M."/>
            <person name="Hayashi Y."/>
            <person name="Hensch T.K."/>
            <person name="Hirokawa N."/>
            <person name="Hill D."/>
            <person name="Huminiecki L."/>
            <person name="Iacono M."/>
            <person name="Ikeo K."/>
            <person name="Iwama A."/>
            <person name="Ishikawa T."/>
            <person name="Jakt M."/>
            <person name="Kanapin A."/>
            <person name="Katoh M."/>
            <person name="Kawasawa Y."/>
            <person name="Kelso J."/>
            <person name="Kitamura H."/>
            <person name="Kitano H."/>
            <person name="Kollias G."/>
            <person name="Krishnan S.P."/>
            <person name="Kruger A."/>
            <person name="Kummerfeld S.K."/>
            <person name="Kurochkin I.V."/>
            <person name="Lareau L.F."/>
            <person name="Lazarevic D."/>
            <person name="Lipovich L."/>
            <person name="Liu J."/>
            <person name="Liuni S."/>
            <person name="McWilliam S."/>
            <person name="Madan Babu M."/>
            <person name="Madera M."/>
            <person name="Marchionni L."/>
            <person name="Matsuda H."/>
            <person name="Matsuzawa S."/>
            <person name="Miki H."/>
            <person name="Mignone F."/>
            <person name="Miyake S."/>
            <person name="Morris K."/>
            <person name="Mottagui-Tabar S."/>
            <person name="Mulder N."/>
            <person name="Nakano N."/>
            <person name="Nakauchi H."/>
            <person name="Ng P."/>
            <person name="Nilsson R."/>
            <person name="Nishiguchi S."/>
            <person name="Nishikawa S."/>
            <person name="Nori F."/>
            <person name="Ohara O."/>
            <person name="Okazaki Y."/>
            <person name="Orlando V."/>
            <person name="Pang K.C."/>
            <person name="Pavan W.J."/>
            <person name="Pavesi G."/>
            <person name="Pesole G."/>
            <person name="Petrovsky N."/>
            <person name="Piazza S."/>
            <person name="Reed J."/>
            <person name="Reid J.F."/>
            <person name="Ring B.Z."/>
            <person name="Ringwald M."/>
            <person name="Rost B."/>
            <person name="Ruan Y."/>
            <person name="Salzberg S.L."/>
            <person name="Sandelin A."/>
            <person name="Schneider C."/>
            <person name="Schoenbach C."/>
            <person name="Sekiguchi K."/>
            <person name="Semple C.A."/>
            <person name="Seno S."/>
            <person name="Sessa L."/>
            <person name="Sheng Y."/>
            <person name="Shibata Y."/>
            <person name="Shimada H."/>
            <person name="Shimada K."/>
            <person name="Silva D."/>
            <person name="Sinclair B."/>
            <person name="Sperling S."/>
            <person name="Stupka E."/>
            <person name="Sugiura K."/>
            <person name="Sultana R."/>
            <person name="Takenaka Y."/>
            <person name="Taki K."/>
            <person name="Tammoja K."/>
            <person name="Tan S.L."/>
            <person name="Tang S."/>
            <person name="Taylor M.S."/>
            <person name="Tegner J."/>
            <person name="Teichmann S.A."/>
            <person name="Ueda H.R."/>
            <person name="van Nimwegen E."/>
            <person name="Verardo R."/>
            <person name="Wei C.L."/>
            <person name="Yagi K."/>
            <person name="Yamanishi H."/>
            <person name="Zabarovsky E."/>
            <person name="Zhu S."/>
            <person name="Zimmer A."/>
            <person name="Hide W."/>
            <person name="Bult C."/>
            <person name="Grimmond S.M."/>
            <person name="Teasdale R.D."/>
            <person name="Liu E.T."/>
            <person name="Brusic V."/>
            <person name="Quackenbush J."/>
            <person name="Wahlestedt C."/>
            <person name="Mattick J.S."/>
            <person name="Hume D.A."/>
            <person name="Kai C."/>
            <person name="Sasaki D."/>
            <person name="Tomaru Y."/>
            <person name="Fukuda S."/>
            <person name="Kanamori-Katayama M."/>
            <person name="Suzuki M."/>
            <person name="Aoki J."/>
            <person name="Arakawa T."/>
            <person name="Iida J."/>
            <person name="Imamura K."/>
            <person name="Itoh M."/>
            <person name="Kato T."/>
            <person name="Kawaji H."/>
            <person name="Kawagashira N."/>
            <person name="Kawashima T."/>
            <person name="Kojima M."/>
            <person name="Kondo S."/>
            <person name="Konno H."/>
            <person name="Nakano K."/>
            <person name="Ninomiya N."/>
            <person name="Nishio T."/>
            <person name="Okada M."/>
            <person name="Plessy C."/>
            <person name="Shibata K."/>
            <person name="Shiraki T."/>
            <person name="Suzuki S."/>
            <person name="Tagami M."/>
            <person name="Waki K."/>
            <person name="Watahiki A."/>
            <person name="Okamura-Oho Y."/>
            <person name="Suzuki H."/>
            <person name="Kawai J."/>
            <person name="Hayashizaki Y."/>
        </authorList>
    </citation>
    <scope>NUCLEOTIDE SEQUENCE [LARGE SCALE MRNA]</scope>
    <source>
        <strain>C57BL/6J</strain>
        <strain>NOD</strain>
        <tissue>Head</tissue>
        <tissue>Spleen</tissue>
    </source>
</reference>
<dbReference type="EMBL" id="M28052">
    <property type="protein sequence ID" value="AAA39283.1"/>
    <property type="molecule type" value="mRNA"/>
</dbReference>
<dbReference type="EMBL" id="AK017288">
    <property type="protein sequence ID" value="BAB30674.1"/>
    <property type="molecule type" value="mRNA"/>
</dbReference>
<dbReference type="EMBL" id="AK157572">
    <property type="protein sequence ID" value="BAE34125.1"/>
    <property type="molecule type" value="mRNA"/>
</dbReference>
<dbReference type="CCDS" id="CCDS27616.1"/>
<dbReference type="PIR" id="A35052">
    <property type="entry name" value="A35052"/>
</dbReference>
<dbReference type="RefSeq" id="NP_032394.1">
    <property type="nucleotide sequence ID" value="NM_008368.4"/>
</dbReference>
<dbReference type="RefSeq" id="XP_006520540.1">
    <property type="nucleotide sequence ID" value="XM_006520477.4"/>
</dbReference>
<dbReference type="RefSeq" id="XP_006520541.1">
    <property type="nucleotide sequence ID" value="XM_006520478.4"/>
</dbReference>
<dbReference type="RefSeq" id="XP_006520542.1">
    <property type="nucleotide sequence ID" value="XM_006520479.2"/>
</dbReference>
<dbReference type="RefSeq" id="XP_006520543.1">
    <property type="nucleotide sequence ID" value="XM_006520480.3"/>
</dbReference>
<dbReference type="RefSeq" id="XP_006520544.1">
    <property type="nucleotide sequence ID" value="XM_006520481.4"/>
</dbReference>
<dbReference type="PDB" id="6DG5">
    <property type="method" value="X-ray"/>
    <property type="resolution" value="2.52 A"/>
    <property type="chains" value="B=27-235"/>
</dbReference>
<dbReference type="PDBsum" id="6DG5"/>
<dbReference type="SMR" id="P16297"/>
<dbReference type="CORUM" id="P16297"/>
<dbReference type="FunCoup" id="P16297">
    <property type="interactions" value="1114"/>
</dbReference>
<dbReference type="IntAct" id="P16297">
    <property type="interactions" value="1"/>
</dbReference>
<dbReference type="STRING" id="10090.ENSMUSP00000086820"/>
<dbReference type="GlyCosmos" id="P16297">
    <property type="glycosylation" value="6 sites, No reported glycans"/>
</dbReference>
<dbReference type="GlyGen" id="P16297">
    <property type="glycosylation" value="6 sites"/>
</dbReference>
<dbReference type="iPTMnet" id="P16297"/>
<dbReference type="PhosphoSitePlus" id="P16297"/>
<dbReference type="PaxDb" id="10090-ENSMUSP00000086820"/>
<dbReference type="ProteomicsDB" id="269474"/>
<dbReference type="Antibodypedia" id="11905">
    <property type="antibodies" value="1011 antibodies from 43 providers"/>
</dbReference>
<dbReference type="DNASU" id="16185"/>
<dbReference type="Ensembl" id="ENSMUST00000089398.9">
    <property type="protein sequence ID" value="ENSMUSP00000086820.2"/>
    <property type="gene ID" value="ENSMUSG00000068227.10"/>
</dbReference>
<dbReference type="Ensembl" id="ENSMUST00000163494.3">
    <property type="protein sequence ID" value="ENSMUSP00000127006.2"/>
    <property type="gene ID" value="ENSMUSG00000068227.10"/>
</dbReference>
<dbReference type="GeneID" id="16185"/>
<dbReference type="KEGG" id="mmu:16185"/>
<dbReference type="UCSC" id="uc007wpk.2">
    <property type="organism name" value="mouse"/>
</dbReference>
<dbReference type="AGR" id="MGI:96550"/>
<dbReference type="CTD" id="3560"/>
<dbReference type="MGI" id="MGI:96550">
    <property type="gene designation" value="Il2rb"/>
</dbReference>
<dbReference type="VEuPathDB" id="HostDB:ENSMUSG00000068227"/>
<dbReference type="eggNOG" id="ENOG502S0MR">
    <property type="taxonomic scope" value="Eukaryota"/>
</dbReference>
<dbReference type="GeneTree" id="ENSGT00510000049239"/>
<dbReference type="HOGENOM" id="CLU_035782_1_0_1"/>
<dbReference type="InParanoid" id="P16297"/>
<dbReference type="OMA" id="QTSCFTN"/>
<dbReference type="OrthoDB" id="9419853at2759"/>
<dbReference type="PhylomeDB" id="P16297"/>
<dbReference type="TreeFam" id="TF337874"/>
<dbReference type="Reactome" id="R-MMU-5673001">
    <property type="pathway name" value="RAF/MAP kinase cascade"/>
</dbReference>
<dbReference type="Reactome" id="R-MMU-8983432">
    <property type="pathway name" value="Interleukin-15 signaling"/>
</dbReference>
<dbReference type="Reactome" id="R-MMU-9020558">
    <property type="pathway name" value="Interleukin-2 signaling"/>
</dbReference>
<dbReference type="Reactome" id="R-MMU-912526">
    <property type="pathway name" value="Interleukin receptor SHC signaling"/>
</dbReference>
<dbReference type="BioGRID-ORCS" id="16185">
    <property type="hits" value="6 hits in 77 CRISPR screens"/>
</dbReference>
<dbReference type="PRO" id="PR:P16297"/>
<dbReference type="Proteomes" id="UP000000589">
    <property type="component" value="Chromosome 15"/>
</dbReference>
<dbReference type="RNAct" id="P16297">
    <property type="molecule type" value="protein"/>
</dbReference>
<dbReference type="Bgee" id="ENSMUSG00000068227">
    <property type="expression patterns" value="Expressed in peripheral lymph node and 57 other cell types or tissues"/>
</dbReference>
<dbReference type="GO" id="GO:0009986">
    <property type="term" value="C:cell surface"/>
    <property type="evidence" value="ECO:0000314"/>
    <property type="project" value="MGI"/>
</dbReference>
<dbReference type="GO" id="GO:0009897">
    <property type="term" value="C:external side of plasma membrane"/>
    <property type="evidence" value="ECO:0000314"/>
    <property type="project" value="MGI"/>
</dbReference>
<dbReference type="GO" id="GO:0005886">
    <property type="term" value="C:plasma membrane"/>
    <property type="evidence" value="ECO:0000304"/>
    <property type="project" value="Reactome"/>
</dbReference>
<dbReference type="GO" id="GO:0015026">
    <property type="term" value="F:coreceptor activity"/>
    <property type="evidence" value="ECO:0007669"/>
    <property type="project" value="Ensembl"/>
</dbReference>
<dbReference type="GO" id="GO:0042010">
    <property type="term" value="F:interleukin-15 receptor activity"/>
    <property type="evidence" value="ECO:0000250"/>
    <property type="project" value="UniProtKB"/>
</dbReference>
<dbReference type="GO" id="GO:0019976">
    <property type="term" value="F:interleukin-2 binding"/>
    <property type="evidence" value="ECO:0000353"/>
    <property type="project" value="MGI"/>
</dbReference>
<dbReference type="GO" id="GO:0004911">
    <property type="term" value="F:interleukin-2 receptor activity"/>
    <property type="evidence" value="ECO:0000250"/>
    <property type="project" value="UniProtKB"/>
</dbReference>
<dbReference type="GO" id="GO:0019221">
    <property type="term" value="P:cytokine-mediated signaling pathway"/>
    <property type="evidence" value="ECO:0000266"/>
    <property type="project" value="MGI"/>
</dbReference>
<dbReference type="GO" id="GO:0035723">
    <property type="term" value="P:interleukin-15-mediated signaling pathway"/>
    <property type="evidence" value="ECO:0000250"/>
    <property type="project" value="UniProtKB"/>
</dbReference>
<dbReference type="GO" id="GO:0038110">
    <property type="term" value="P:interleukin-2-mediated signaling pathway"/>
    <property type="evidence" value="ECO:0000250"/>
    <property type="project" value="UniProtKB"/>
</dbReference>
<dbReference type="GO" id="GO:0043066">
    <property type="term" value="P:negative regulation of apoptotic process"/>
    <property type="evidence" value="ECO:0000266"/>
    <property type="project" value="MGI"/>
</dbReference>
<dbReference type="GO" id="GO:0050766">
    <property type="term" value="P:positive regulation of phagocytosis"/>
    <property type="evidence" value="ECO:0000250"/>
    <property type="project" value="UniProtKB"/>
</dbReference>
<dbReference type="CDD" id="cd00063">
    <property type="entry name" value="FN3"/>
    <property type="match status" value="1"/>
</dbReference>
<dbReference type="Gene3D" id="2.60.40.10">
    <property type="entry name" value="Immunoglobulins"/>
    <property type="match status" value="2"/>
</dbReference>
<dbReference type="InterPro" id="IPR003961">
    <property type="entry name" value="FN3_dom"/>
</dbReference>
<dbReference type="InterPro" id="IPR036116">
    <property type="entry name" value="FN3_sf"/>
</dbReference>
<dbReference type="InterPro" id="IPR003531">
    <property type="entry name" value="Hempt_rcpt_S_F1_CS"/>
</dbReference>
<dbReference type="InterPro" id="IPR013783">
    <property type="entry name" value="Ig-like_fold"/>
</dbReference>
<dbReference type="InterPro" id="IPR040951">
    <property type="entry name" value="IL2RB_N1"/>
</dbReference>
<dbReference type="PANTHER" id="PTHR23037">
    <property type="entry name" value="CYTOKINE RECEPTOR"/>
    <property type="match status" value="1"/>
</dbReference>
<dbReference type="PANTHER" id="PTHR23037:SF30">
    <property type="entry name" value="INTERLEUKIN-2 RECEPTOR SUBUNIT BETA"/>
    <property type="match status" value="1"/>
</dbReference>
<dbReference type="Pfam" id="PF18707">
    <property type="entry name" value="IL2RB_N1"/>
    <property type="match status" value="1"/>
</dbReference>
<dbReference type="SUPFAM" id="SSF49265">
    <property type="entry name" value="Fibronectin type III"/>
    <property type="match status" value="2"/>
</dbReference>
<dbReference type="PROSITE" id="PS50853">
    <property type="entry name" value="FN3"/>
    <property type="match status" value="1"/>
</dbReference>
<dbReference type="PROSITE" id="PS01355">
    <property type="entry name" value="HEMATOPO_REC_S_F1"/>
    <property type="match status" value="1"/>
</dbReference>
<proteinExistence type="evidence at protein level"/>
<keyword id="KW-0002">3D-structure</keyword>
<keyword id="KW-1003">Cell membrane</keyword>
<keyword id="KW-1015">Disulfide bond</keyword>
<keyword id="KW-0325">Glycoprotein</keyword>
<keyword id="KW-0472">Membrane</keyword>
<keyword id="KW-0675">Receptor</keyword>
<keyword id="KW-1185">Reference proteome</keyword>
<keyword id="KW-0732">Signal</keyword>
<keyword id="KW-0812">Transmembrane</keyword>
<keyword id="KW-1133">Transmembrane helix</keyword>